<name>DJC18_HUMAN</name>
<sequence>MAATLGSGERWTEAYIDAVRRNKYPEDTPPESHDPCGCCNCMKAQKEKKSENEWTQTRQGEGNSTYSEEQLLGVQRIKKCRNYYEILGVSRDASDEELKKAYRKLALKFHPDKNCAPGATDAFKAIGNAFAVLSNPDKRLRYDEYGDEQVTFTAPRARPYNYYRDFEADITPEELFNVFFGGHFPTGNIHMFSNVTDDTYYYRRRHRHERTQTQKEEEEEKPQTTYSAFIQLLPVLVIVIISVITQLLATNPPYSLFYKSTLGYTISRETQNLQVPYFVDKNFDKAYRGASLHDLEKTIEKDYIDYIQTSCWKEKQQKSELTNLAGLYRDERLKQKAESLKLENCEKLSKLIGLRRGG</sequence>
<protein>
    <recommendedName>
        <fullName evidence="4">DnaJ homolog subfamily C member 18</fullName>
    </recommendedName>
</protein>
<keyword id="KW-0143">Chaperone</keyword>
<keyword id="KW-0256">Endoplasmic reticulum</keyword>
<keyword id="KW-0472">Membrane</keyword>
<keyword id="KW-1267">Proteomics identification</keyword>
<keyword id="KW-1185">Reference proteome</keyword>
<keyword id="KW-0812">Transmembrane</keyword>
<keyword id="KW-1133">Transmembrane helix</keyword>
<evidence type="ECO:0000255" key="1"/>
<evidence type="ECO:0000255" key="2">
    <source>
        <dbReference type="PROSITE-ProRule" id="PRU00286"/>
    </source>
</evidence>
<evidence type="ECO:0000269" key="3">
    <source>
    </source>
</evidence>
<evidence type="ECO:0000305" key="4"/>
<evidence type="ECO:0000312" key="5">
    <source>
        <dbReference type="HGNC" id="HGNC:28429"/>
    </source>
</evidence>
<reference key="1">
    <citation type="journal article" date="2004" name="Nat. Genet.">
        <title>Complete sequencing and characterization of 21,243 full-length human cDNAs.</title>
        <authorList>
            <person name="Ota T."/>
            <person name="Suzuki Y."/>
            <person name="Nishikawa T."/>
            <person name="Otsuki T."/>
            <person name="Sugiyama T."/>
            <person name="Irie R."/>
            <person name="Wakamatsu A."/>
            <person name="Hayashi K."/>
            <person name="Sato H."/>
            <person name="Nagai K."/>
            <person name="Kimura K."/>
            <person name="Makita H."/>
            <person name="Sekine M."/>
            <person name="Obayashi M."/>
            <person name="Nishi T."/>
            <person name="Shibahara T."/>
            <person name="Tanaka T."/>
            <person name="Ishii S."/>
            <person name="Yamamoto J."/>
            <person name="Saito K."/>
            <person name="Kawai Y."/>
            <person name="Isono Y."/>
            <person name="Nakamura Y."/>
            <person name="Nagahari K."/>
            <person name="Murakami K."/>
            <person name="Yasuda T."/>
            <person name="Iwayanagi T."/>
            <person name="Wagatsuma M."/>
            <person name="Shiratori A."/>
            <person name="Sudo H."/>
            <person name="Hosoiri T."/>
            <person name="Kaku Y."/>
            <person name="Kodaira H."/>
            <person name="Kondo H."/>
            <person name="Sugawara M."/>
            <person name="Takahashi M."/>
            <person name="Kanda K."/>
            <person name="Yokoi T."/>
            <person name="Furuya T."/>
            <person name="Kikkawa E."/>
            <person name="Omura Y."/>
            <person name="Abe K."/>
            <person name="Kamihara K."/>
            <person name="Katsuta N."/>
            <person name="Sato K."/>
            <person name="Tanikawa M."/>
            <person name="Yamazaki M."/>
            <person name="Ninomiya K."/>
            <person name="Ishibashi T."/>
            <person name="Yamashita H."/>
            <person name="Murakawa K."/>
            <person name="Fujimori K."/>
            <person name="Tanai H."/>
            <person name="Kimata M."/>
            <person name="Watanabe M."/>
            <person name="Hiraoka S."/>
            <person name="Chiba Y."/>
            <person name="Ishida S."/>
            <person name="Ono Y."/>
            <person name="Takiguchi S."/>
            <person name="Watanabe S."/>
            <person name="Yosida M."/>
            <person name="Hotuta T."/>
            <person name="Kusano J."/>
            <person name="Kanehori K."/>
            <person name="Takahashi-Fujii A."/>
            <person name="Hara H."/>
            <person name="Tanase T.-O."/>
            <person name="Nomura Y."/>
            <person name="Togiya S."/>
            <person name="Komai F."/>
            <person name="Hara R."/>
            <person name="Takeuchi K."/>
            <person name="Arita M."/>
            <person name="Imose N."/>
            <person name="Musashino K."/>
            <person name="Yuuki H."/>
            <person name="Oshima A."/>
            <person name="Sasaki N."/>
            <person name="Aotsuka S."/>
            <person name="Yoshikawa Y."/>
            <person name="Matsunawa H."/>
            <person name="Ichihara T."/>
            <person name="Shiohata N."/>
            <person name="Sano S."/>
            <person name="Moriya S."/>
            <person name="Momiyama H."/>
            <person name="Satoh N."/>
            <person name="Takami S."/>
            <person name="Terashima Y."/>
            <person name="Suzuki O."/>
            <person name="Nakagawa S."/>
            <person name="Senoh A."/>
            <person name="Mizoguchi H."/>
            <person name="Goto Y."/>
            <person name="Shimizu F."/>
            <person name="Wakebe H."/>
            <person name="Hishigaki H."/>
            <person name="Watanabe T."/>
            <person name="Sugiyama A."/>
            <person name="Takemoto M."/>
            <person name="Kawakami B."/>
            <person name="Yamazaki M."/>
            <person name="Watanabe K."/>
            <person name="Kumagai A."/>
            <person name="Itakura S."/>
            <person name="Fukuzumi Y."/>
            <person name="Fujimori Y."/>
            <person name="Komiyama M."/>
            <person name="Tashiro H."/>
            <person name="Tanigami A."/>
            <person name="Fujiwara T."/>
            <person name="Ono T."/>
            <person name="Yamada K."/>
            <person name="Fujii Y."/>
            <person name="Ozaki K."/>
            <person name="Hirao M."/>
            <person name="Ohmori Y."/>
            <person name="Kawabata A."/>
            <person name="Hikiji T."/>
            <person name="Kobatake N."/>
            <person name="Inagaki H."/>
            <person name="Ikema Y."/>
            <person name="Okamoto S."/>
            <person name="Okitani R."/>
            <person name="Kawakami T."/>
            <person name="Noguchi S."/>
            <person name="Itoh T."/>
            <person name="Shigeta K."/>
            <person name="Senba T."/>
            <person name="Matsumura K."/>
            <person name="Nakajima Y."/>
            <person name="Mizuno T."/>
            <person name="Morinaga M."/>
            <person name="Sasaki M."/>
            <person name="Togashi T."/>
            <person name="Oyama M."/>
            <person name="Hata H."/>
            <person name="Watanabe M."/>
            <person name="Komatsu T."/>
            <person name="Mizushima-Sugano J."/>
            <person name="Satoh T."/>
            <person name="Shirai Y."/>
            <person name="Takahashi Y."/>
            <person name="Nakagawa K."/>
            <person name="Okumura K."/>
            <person name="Nagase T."/>
            <person name="Nomura N."/>
            <person name="Kikuchi H."/>
            <person name="Masuho Y."/>
            <person name="Yamashita R."/>
            <person name="Nakai K."/>
            <person name="Yada T."/>
            <person name="Nakamura Y."/>
            <person name="Ohara O."/>
            <person name="Isogai T."/>
            <person name="Sugano S."/>
        </authorList>
    </citation>
    <scope>NUCLEOTIDE SEQUENCE [LARGE SCALE MRNA]</scope>
</reference>
<reference key="2">
    <citation type="journal article" date="2004" name="Genome Res.">
        <title>The status, quality, and expansion of the NIH full-length cDNA project: the Mammalian Gene Collection (MGC).</title>
        <authorList>
            <consortium name="The MGC Project Team"/>
        </authorList>
    </citation>
    <scope>NUCLEOTIDE SEQUENCE [LARGE SCALE MRNA]</scope>
    <source>
        <tissue>Muscle</tissue>
    </source>
</reference>
<reference key="3">
    <citation type="journal article" date="2015" name="J. Virol.">
        <title>The endoplasmic reticulum membrane J protein C18 executes a distinct role in promoting simian virus 40 membrane penetration.</title>
        <authorList>
            <person name="Bagchi P."/>
            <person name="Walczak C.P."/>
            <person name="Tsai B."/>
        </authorList>
    </citation>
    <scope>FUNCTION (MICROBIAL INFECTION)</scope>
    <scope>SUBCELLULAR LOCATION</scope>
    <scope>SUBCELLULAR LOCATION (MICROBIAL INFECTION)</scope>
    <scope>MUTAGENESIS OF HIS-110</scope>
</reference>
<dbReference type="EMBL" id="AK024054">
    <property type="protein sequence ID" value="BAB14804.1"/>
    <property type="molecule type" value="mRNA"/>
</dbReference>
<dbReference type="EMBL" id="BC030162">
    <property type="protein sequence ID" value="AAH30162.1"/>
    <property type="molecule type" value="mRNA"/>
</dbReference>
<dbReference type="CCDS" id="CCDS4214.1"/>
<dbReference type="RefSeq" id="NP_689899.1">
    <property type="nucleotide sequence ID" value="NM_152686.4"/>
</dbReference>
<dbReference type="SMR" id="Q9H819"/>
<dbReference type="BioGRID" id="128416">
    <property type="interactions" value="76"/>
</dbReference>
<dbReference type="FunCoup" id="Q9H819">
    <property type="interactions" value="672"/>
</dbReference>
<dbReference type="IntAct" id="Q9H819">
    <property type="interactions" value="45"/>
</dbReference>
<dbReference type="MINT" id="Q9H819"/>
<dbReference type="STRING" id="9606.ENSP00000302843"/>
<dbReference type="iPTMnet" id="Q9H819"/>
<dbReference type="PhosphoSitePlus" id="Q9H819"/>
<dbReference type="BioMuta" id="DNAJC18"/>
<dbReference type="DMDM" id="74733748"/>
<dbReference type="jPOST" id="Q9H819"/>
<dbReference type="MassIVE" id="Q9H819"/>
<dbReference type="PaxDb" id="9606-ENSP00000302843"/>
<dbReference type="PeptideAtlas" id="Q9H819"/>
<dbReference type="ProteomicsDB" id="81170"/>
<dbReference type="Pumba" id="Q9H819"/>
<dbReference type="Antibodypedia" id="26786">
    <property type="antibodies" value="26 antibodies from 13 providers"/>
</dbReference>
<dbReference type="DNASU" id="202052"/>
<dbReference type="Ensembl" id="ENST00000302060.10">
    <property type="protein sequence ID" value="ENSP00000302843.5"/>
    <property type="gene ID" value="ENSG00000170464.10"/>
</dbReference>
<dbReference type="GeneID" id="202052"/>
<dbReference type="KEGG" id="hsa:202052"/>
<dbReference type="MANE-Select" id="ENST00000302060.10">
    <property type="protein sequence ID" value="ENSP00000302843.5"/>
    <property type="RefSeq nucleotide sequence ID" value="NM_152686.4"/>
    <property type="RefSeq protein sequence ID" value="NP_689899.1"/>
</dbReference>
<dbReference type="UCSC" id="uc003len.4">
    <property type="organism name" value="human"/>
</dbReference>
<dbReference type="AGR" id="HGNC:28429"/>
<dbReference type="CTD" id="202052"/>
<dbReference type="DisGeNET" id="202052"/>
<dbReference type="GeneCards" id="DNAJC18"/>
<dbReference type="HGNC" id="HGNC:28429">
    <property type="gene designation" value="DNAJC18"/>
</dbReference>
<dbReference type="HPA" id="ENSG00000170464">
    <property type="expression patterns" value="Tissue enriched (testis)"/>
</dbReference>
<dbReference type="MIM" id="621108">
    <property type="type" value="gene"/>
</dbReference>
<dbReference type="neXtProt" id="NX_Q9H819"/>
<dbReference type="OpenTargets" id="ENSG00000170464"/>
<dbReference type="PharmGKB" id="PA142671966"/>
<dbReference type="VEuPathDB" id="HostDB:ENSG00000170464"/>
<dbReference type="eggNOG" id="KOG0714">
    <property type="taxonomic scope" value="Eukaryota"/>
</dbReference>
<dbReference type="GeneTree" id="ENSGT00940000160925"/>
<dbReference type="HOGENOM" id="CLU_043579_3_0_1"/>
<dbReference type="InParanoid" id="Q9H819"/>
<dbReference type="OMA" id="TGQARHY"/>
<dbReference type="OrthoDB" id="552049at2759"/>
<dbReference type="PAN-GO" id="Q9H819">
    <property type="GO annotations" value="5 GO annotations based on evolutionary models"/>
</dbReference>
<dbReference type="PhylomeDB" id="Q9H819"/>
<dbReference type="TreeFam" id="TF105145"/>
<dbReference type="PathwayCommons" id="Q9H819"/>
<dbReference type="SignaLink" id="Q9H819"/>
<dbReference type="BioGRID-ORCS" id="202052">
    <property type="hits" value="8 hits in 1156 CRISPR screens"/>
</dbReference>
<dbReference type="ChiTaRS" id="DNAJC18">
    <property type="organism name" value="human"/>
</dbReference>
<dbReference type="GenomeRNAi" id="202052"/>
<dbReference type="Pharos" id="Q9H819">
    <property type="development level" value="Tdark"/>
</dbReference>
<dbReference type="PRO" id="PR:Q9H819"/>
<dbReference type="Proteomes" id="UP000005640">
    <property type="component" value="Chromosome 5"/>
</dbReference>
<dbReference type="RNAct" id="Q9H819">
    <property type="molecule type" value="protein"/>
</dbReference>
<dbReference type="Bgee" id="ENSG00000170464">
    <property type="expression patterns" value="Expressed in left testis and 105 other cell types or tissues"/>
</dbReference>
<dbReference type="ExpressionAtlas" id="Q9H819">
    <property type="expression patterns" value="baseline and differential"/>
</dbReference>
<dbReference type="GO" id="GO:0005789">
    <property type="term" value="C:endoplasmic reticulum membrane"/>
    <property type="evidence" value="ECO:0000314"/>
    <property type="project" value="UniProtKB"/>
</dbReference>
<dbReference type="GO" id="GO:0030544">
    <property type="term" value="F:Hsp70 protein binding"/>
    <property type="evidence" value="ECO:0000318"/>
    <property type="project" value="GO_Central"/>
</dbReference>
<dbReference type="GO" id="GO:0071218">
    <property type="term" value="P:cellular response to misfolded protein"/>
    <property type="evidence" value="ECO:0000318"/>
    <property type="project" value="GO_Central"/>
</dbReference>
<dbReference type="GO" id="GO:0051085">
    <property type="term" value="P:chaperone cofactor-dependent protein refolding"/>
    <property type="evidence" value="ECO:0000318"/>
    <property type="project" value="GO_Central"/>
</dbReference>
<dbReference type="CDD" id="cd06257">
    <property type="entry name" value="DnaJ"/>
    <property type="match status" value="1"/>
</dbReference>
<dbReference type="FunFam" id="1.10.287.110:FF:000004">
    <property type="entry name" value="DnaJ (Hsp40) homolog, subfamily B, member 14"/>
    <property type="match status" value="1"/>
</dbReference>
<dbReference type="Gene3D" id="1.10.287.110">
    <property type="entry name" value="DnaJ domain"/>
    <property type="match status" value="1"/>
</dbReference>
<dbReference type="InterPro" id="IPR001623">
    <property type="entry name" value="DnaJ_domain"/>
</dbReference>
<dbReference type="InterPro" id="IPR018253">
    <property type="entry name" value="DnaJ_domain_CS"/>
</dbReference>
<dbReference type="InterPro" id="IPR051100">
    <property type="entry name" value="DnaJ_subfamily_B/C"/>
</dbReference>
<dbReference type="InterPro" id="IPR015399">
    <property type="entry name" value="DUF1977_DnaJ-like"/>
</dbReference>
<dbReference type="InterPro" id="IPR036869">
    <property type="entry name" value="J_dom_sf"/>
</dbReference>
<dbReference type="PANTHER" id="PTHR43908">
    <property type="entry name" value="AT29763P-RELATED"/>
    <property type="match status" value="1"/>
</dbReference>
<dbReference type="PANTHER" id="PTHR43908:SF2">
    <property type="entry name" value="DNAJ HOMOLOG SUBFAMILY C MEMBER 18"/>
    <property type="match status" value="1"/>
</dbReference>
<dbReference type="Pfam" id="PF00226">
    <property type="entry name" value="DnaJ"/>
    <property type="match status" value="1"/>
</dbReference>
<dbReference type="Pfam" id="PF09320">
    <property type="entry name" value="DUF1977"/>
    <property type="match status" value="1"/>
</dbReference>
<dbReference type="PRINTS" id="PR00625">
    <property type="entry name" value="JDOMAIN"/>
</dbReference>
<dbReference type="SMART" id="SM00271">
    <property type="entry name" value="DnaJ"/>
    <property type="match status" value="1"/>
</dbReference>
<dbReference type="SUPFAM" id="SSF46565">
    <property type="entry name" value="Chaperone J-domain"/>
    <property type="match status" value="1"/>
</dbReference>
<dbReference type="PROSITE" id="PS00636">
    <property type="entry name" value="DNAJ_1"/>
    <property type="match status" value="1"/>
</dbReference>
<dbReference type="PROSITE" id="PS50076">
    <property type="entry name" value="DNAJ_2"/>
    <property type="match status" value="1"/>
</dbReference>
<gene>
    <name evidence="5" type="primary">DNAJC18</name>
</gene>
<comment type="function">
    <text evidence="3">(Microbial infection) In case of infection by polyomavirus, involved in the virus endoplasmic reticulum membrane penetration and infection (PubMed:25631089). Regulates the recruitment of DNAJB12:DNAJB14 into SV40-induced foci and all cooperate to guide SV40 across the endoplasmic reticulum membrane. The foci represent the site from which SV40 penetrates into the cytosol (PubMed:25631089).</text>
</comment>
<comment type="subcellular location">
    <subcellularLocation>
        <location evidence="3">Endoplasmic reticulum membrane</location>
        <topology evidence="4">Single-pass membrane protein</topology>
    </subcellularLocation>
</comment>
<comment type="subcellular location">
    <text evidence="3">(Microbial infection) Upon SV40 infection, colocalizes with BCAP31, DNAJB12 and DNAJB14 in punctate structures within the endoplasmic reticulum membrane.</text>
</comment>
<proteinExistence type="evidence at protein level"/>
<organism>
    <name type="scientific">Homo sapiens</name>
    <name type="common">Human</name>
    <dbReference type="NCBI Taxonomy" id="9606"/>
    <lineage>
        <taxon>Eukaryota</taxon>
        <taxon>Metazoa</taxon>
        <taxon>Chordata</taxon>
        <taxon>Craniata</taxon>
        <taxon>Vertebrata</taxon>
        <taxon>Euteleostomi</taxon>
        <taxon>Mammalia</taxon>
        <taxon>Eutheria</taxon>
        <taxon>Euarchontoglires</taxon>
        <taxon>Primates</taxon>
        <taxon>Haplorrhini</taxon>
        <taxon>Catarrhini</taxon>
        <taxon>Hominidae</taxon>
        <taxon>Homo</taxon>
    </lineage>
</organism>
<feature type="chain" id="PRO_0000244085" description="DnaJ homolog subfamily C member 18">
    <location>
        <begin position="1"/>
        <end position="358"/>
    </location>
</feature>
<feature type="transmembrane region" description="Helical" evidence="1">
    <location>
        <begin position="228"/>
        <end position="248"/>
    </location>
</feature>
<feature type="domain" description="J" evidence="2">
    <location>
        <begin position="82"/>
        <end position="146"/>
    </location>
</feature>
<feature type="mutagenesis site" description="Loss of colocalization with SV40-induced foci upon SV40 invection." evidence="3">
    <original>H</original>
    <variation>Q</variation>
    <location>
        <position position="110"/>
    </location>
</feature>
<accession>Q9H819</accession>